<evidence type="ECO:0000250" key="1">
    <source>
        <dbReference type="UniProtKB" id="Q7XB10"/>
    </source>
</evidence>
<evidence type="ECO:0000255" key="2">
    <source>
        <dbReference type="PROSITE-ProRule" id="PRU01020"/>
    </source>
</evidence>
<evidence type="ECO:0000269" key="3">
    <source>
    </source>
</evidence>
<evidence type="ECO:0000303" key="4">
    <source>
    </source>
</evidence>
<evidence type="ECO:0000305" key="5"/>
<evidence type="ECO:0000305" key="6">
    <source>
    </source>
</evidence>
<protein>
    <recommendedName>
        <fullName evidence="4">Myricetin 3'/5'-O-methyltransferase 1</fullName>
        <shortName evidence="4">ShMOMT1</shortName>
    </recommendedName>
    <alternativeName>
        <fullName evidence="6">3'-methyl myricetin 5'-O-methyltransferase</fullName>
        <shortName evidence="5">Syringetin synthase</shortName>
        <ecNumber evidence="2 3">2.1.1.267</ecNumber>
    </alternativeName>
    <alternativeName>
        <fullName evidence="6">3-methyl quercetin 3'-O-methyltransferase</fullName>
        <ecNumber evidence="2 3">2.1.1.-</ecNumber>
    </alternativeName>
    <alternativeName>
        <fullName evidence="6">7-methyl quercetin 3'-O-methyltransferase</fullName>
        <shortName evidence="6">Rhamnetin 3'-O-methyltransferase</shortName>
        <ecNumber evidence="2 3">2.1.1.-</ecNumber>
    </alternativeName>
    <alternativeName>
        <fullName evidence="6">Myricetin 3'-O-methyltransferase</fullName>
        <shortName evidence="5">Laricitrin synthase</shortName>
        <ecNumber evidence="2 3">2.1.1.267</ecNumber>
    </alternativeName>
    <alternativeName>
        <fullName evidence="6">Quercetin 3'-O-methyltransferase</fullName>
        <shortName evidence="5">Isorhamnetin synthase</shortName>
        <ecNumber evidence="2 3">2.1.1.267</ecNumber>
    </alternativeName>
</protein>
<dbReference type="EC" id="2.1.1.267" evidence="2 3"/>
<dbReference type="EC" id="2.1.1.-" evidence="2 3"/>
<dbReference type="EMBL" id="JF499656">
    <property type="protein sequence ID" value="ADZ76433.1"/>
    <property type="molecule type" value="mRNA"/>
</dbReference>
<dbReference type="SMR" id="F2YTN4"/>
<dbReference type="BioCyc" id="MetaCyc:MONOMER-17828"/>
<dbReference type="GO" id="GO:0102822">
    <property type="term" value="F:flavone 3'-O-methyltransferase activity"/>
    <property type="evidence" value="ECO:0000314"/>
    <property type="project" value="UniProtKB"/>
</dbReference>
<dbReference type="GO" id="GO:0033799">
    <property type="term" value="F:myricetin 3'-O-methyltransferase activity"/>
    <property type="evidence" value="ECO:0000314"/>
    <property type="project" value="UniProtKB"/>
</dbReference>
<dbReference type="GO" id="GO:0046983">
    <property type="term" value="F:protein dimerization activity"/>
    <property type="evidence" value="ECO:0007669"/>
    <property type="project" value="InterPro"/>
</dbReference>
<dbReference type="GO" id="GO:0102447">
    <property type="term" value="F:rhamnetin 3'-O-methyltransferase activity"/>
    <property type="evidence" value="ECO:0000314"/>
    <property type="project" value="UniProtKB"/>
</dbReference>
<dbReference type="GO" id="GO:0009813">
    <property type="term" value="P:flavonoid biosynthetic process"/>
    <property type="evidence" value="ECO:0000314"/>
    <property type="project" value="UniProtKB"/>
</dbReference>
<dbReference type="GO" id="GO:0032259">
    <property type="term" value="P:methylation"/>
    <property type="evidence" value="ECO:0007669"/>
    <property type="project" value="UniProtKB-KW"/>
</dbReference>
<dbReference type="CDD" id="cd02440">
    <property type="entry name" value="AdoMet_MTases"/>
    <property type="match status" value="1"/>
</dbReference>
<dbReference type="FunFam" id="1.10.10.10:FF:000357">
    <property type="entry name" value="Caffeic acid 3-O-methyltransferase"/>
    <property type="match status" value="1"/>
</dbReference>
<dbReference type="Gene3D" id="3.40.50.150">
    <property type="entry name" value="Vaccinia Virus protein VP39"/>
    <property type="match status" value="1"/>
</dbReference>
<dbReference type="Gene3D" id="1.10.10.10">
    <property type="entry name" value="Winged helix-like DNA-binding domain superfamily/Winged helix DNA-binding domain"/>
    <property type="match status" value="1"/>
</dbReference>
<dbReference type="InterPro" id="IPR016461">
    <property type="entry name" value="COMT-like"/>
</dbReference>
<dbReference type="InterPro" id="IPR001077">
    <property type="entry name" value="O_MeTrfase_dom"/>
</dbReference>
<dbReference type="InterPro" id="IPR012967">
    <property type="entry name" value="Plant_O-MeTrfase_dimerisation"/>
</dbReference>
<dbReference type="InterPro" id="IPR029063">
    <property type="entry name" value="SAM-dependent_MTases_sf"/>
</dbReference>
<dbReference type="InterPro" id="IPR036388">
    <property type="entry name" value="WH-like_DNA-bd_sf"/>
</dbReference>
<dbReference type="InterPro" id="IPR036390">
    <property type="entry name" value="WH_DNA-bd_sf"/>
</dbReference>
<dbReference type="PANTHER" id="PTHR11746">
    <property type="entry name" value="O-METHYLTRANSFERASE"/>
    <property type="match status" value="1"/>
</dbReference>
<dbReference type="Pfam" id="PF08100">
    <property type="entry name" value="Dimerisation"/>
    <property type="match status" value="1"/>
</dbReference>
<dbReference type="Pfam" id="PF00891">
    <property type="entry name" value="Methyltransf_2"/>
    <property type="match status" value="1"/>
</dbReference>
<dbReference type="PIRSF" id="PIRSF005739">
    <property type="entry name" value="O-mtase"/>
    <property type="match status" value="1"/>
</dbReference>
<dbReference type="SUPFAM" id="SSF53335">
    <property type="entry name" value="S-adenosyl-L-methionine-dependent methyltransferases"/>
    <property type="match status" value="1"/>
</dbReference>
<dbReference type="SUPFAM" id="SSF46785">
    <property type="entry name" value="Winged helix' DNA-binding domain"/>
    <property type="match status" value="1"/>
</dbReference>
<dbReference type="PROSITE" id="PS51683">
    <property type="entry name" value="SAM_OMT_II"/>
    <property type="match status" value="1"/>
</dbReference>
<organism>
    <name type="scientific">Solanum habrochaites</name>
    <name type="common">Wild tomato</name>
    <name type="synonym">Lycopersicon hirsutum</name>
    <dbReference type="NCBI Taxonomy" id="62890"/>
    <lineage>
        <taxon>Eukaryota</taxon>
        <taxon>Viridiplantae</taxon>
        <taxon>Streptophyta</taxon>
        <taxon>Embryophyta</taxon>
        <taxon>Tracheophyta</taxon>
        <taxon>Spermatophyta</taxon>
        <taxon>Magnoliopsida</taxon>
        <taxon>eudicotyledons</taxon>
        <taxon>Gunneridae</taxon>
        <taxon>Pentapetalae</taxon>
        <taxon>asterids</taxon>
        <taxon>lamiids</taxon>
        <taxon>Solanales</taxon>
        <taxon>Solanaceae</taxon>
        <taxon>Solanoideae</taxon>
        <taxon>Solaneae</taxon>
        <taxon>Solanum</taxon>
        <taxon>Solanum subgen. Lycopersicon</taxon>
    </lineage>
</organism>
<proteinExistence type="evidence at protein level"/>
<name>MOMT1_SOLHA</name>
<feature type="chain" id="PRO_0000457368" description="Myricetin 3'/5'-O-methyltransferase 1">
    <location>
        <begin position="1"/>
        <end position="362"/>
    </location>
</feature>
<feature type="active site" description="Proton acceptor" evidence="2">
    <location>
        <position position="267"/>
    </location>
</feature>
<feature type="binding site" evidence="2">
    <location>
        <position position="229"/>
    </location>
    <ligand>
        <name>S-adenosyl-L-methionine</name>
        <dbReference type="ChEBI" id="CHEBI:59789"/>
    </ligand>
</feature>
<sequence length="362" mass="40500">MALSMDNIVISNEEEICMMKAMHLPCGLYLNMVLKAAIELDLFEIIAKSTTQKLSSYEIASQIPTKNPNASSLVLERILRFLASQSLLTCNITKNDDGNVHTTYNLTPLSQSLISDKDGTSIAPFLLLATDPVGVHACFHLKDAILEGEIPFNKAHGVHAFEYHGKDSRMNGLFNKAMQNLTCIEMKRIVECYNGFQGVKEIIDVGGGLGISLASIISKYPNIKGINFDLPHVIKDAPTYEGIEHVGGDMWDSIPQGELIILKAVLHSLDDEDCVKILKNCWRALPNDGKVVVIEQIQPKYPETNLLSKRSFSFDISMMIMFHGGKERTKQQFEDLAKQAGFTYIKVVARAYYSWLIELYKY</sequence>
<comment type="function">
    <text evidence="3">Flavonoid 3'/5'-O-methyltransferase involved in the biosynthesis of polymethoxylated flavonoids natural products such as myricetin derivatives, aroma compounds possessing antioxidant properties and exhibiting pharmacological activities such as anti-carcinogen, anti-viral, anti-thrombotic, anti-diabetic, anti-atherosclerotic, and anti-inflammatory effects (PubMed:21343428). Catalyzes S-adenosylmethionine-dependent regioselective 3'/5'-O-methylation of flavonoids; active on various hydroxylated flavonoid substrates, including myricetin and quercetin, but inactive toward kaempferol (PubMed:21343428). Mediates the formation of 3'-methyl derivatives from quercetin, myricetin, 3-methyl quercetin and 7-methyl quercetin (rhamnetin), producing 3'-methyl quercetin (isorhamnetin), 3'-methyl myricetin (laricitrin), 3,3'-dimethyl quercetin (3-O-methylisorhamnetin) and 7,3'-dimethyl quercetin (7-O-methylisorhamnetin), respectively (PubMed:21343428). Triggers the 5'-O-methylation of 3'-methyl myricetin (laricitrin), thus leading to production of 3',5'-dimethyl myricetin (syringetin) (PubMed:21343428).</text>
</comment>
<comment type="catalytic activity">
    <reaction evidence="3">
        <text>myricetin + S-adenosyl-L-methionine = laricitrin + S-adenosyl-L-homocysteine + H(+)</text>
        <dbReference type="Rhea" id="RHEA:25629"/>
        <dbReference type="ChEBI" id="CHEBI:15378"/>
        <dbReference type="ChEBI" id="CHEBI:57856"/>
        <dbReference type="ChEBI" id="CHEBI:58395"/>
        <dbReference type="ChEBI" id="CHEBI:59789"/>
        <dbReference type="ChEBI" id="CHEBI:60006"/>
        <dbReference type="EC" id="2.1.1.267"/>
    </reaction>
    <physiologicalReaction direction="left-to-right" evidence="3">
        <dbReference type="Rhea" id="RHEA:25630"/>
    </physiologicalReaction>
</comment>
<comment type="catalytic activity">
    <reaction evidence="3">
        <text>laricitrin + S-adenosyl-L-methionine = syringetin + S-adenosyl-L-homocysteine + H(+)</text>
        <dbReference type="Rhea" id="RHEA:25633"/>
        <dbReference type="ChEBI" id="CHEBI:15378"/>
        <dbReference type="ChEBI" id="CHEBI:57856"/>
        <dbReference type="ChEBI" id="CHEBI:58412"/>
        <dbReference type="ChEBI" id="CHEBI:59789"/>
        <dbReference type="ChEBI" id="CHEBI:60006"/>
        <dbReference type="EC" id="2.1.1.267"/>
    </reaction>
    <physiologicalReaction direction="left-to-right" evidence="3">
        <dbReference type="Rhea" id="RHEA:25634"/>
    </physiologicalReaction>
</comment>
<comment type="catalytic activity">
    <reaction evidence="3">
        <text>a 3'-hydroxyflavone + S-adenosyl-L-methionine = a 3'-methoxyflavone + S-adenosyl-L-homocysteine + H(+)</text>
        <dbReference type="Rhea" id="RHEA:55332"/>
        <dbReference type="ChEBI" id="CHEBI:15378"/>
        <dbReference type="ChEBI" id="CHEBI:27741"/>
        <dbReference type="ChEBI" id="CHEBI:57856"/>
        <dbReference type="ChEBI" id="CHEBI:59789"/>
        <dbReference type="ChEBI" id="CHEBI:138730"/>
        <dbReference type="EC" id="2.1.1.267"/>
    </reaction>
</comment>
<comment type="catalytic activity">
    <reaction evidence="3">
        <text>a 5'-hydroxy-3'-methoxyflavone + S-adenosyl-L-methionine = a 3',5'-dimethoxyflavone + S-adenosyl-L-homocysteine + H(+)</text>
        <dbReference type="Rhea" id="RHEA:55336"/>
        <dbReference type="ChEBI" id="CHEBI:15378"/>
        <dbReference type="ChEBI" id="CHEBI:57856"/>
        <dbReference type="ChEBI" id="CHEBI:59789"/>
        <dbReference type="ChEBI" id="CHEBI:138731"/>
        <dbReference type="ChEBI" id="CHEBI:138732"/>
        <dbReference type="EC" id="2.1.1.267"/>
    </reaction>
</comment>
<comment type="catalytic activity">
    <reaction evidence="3">
        <text>quercetin + S-adenosyl-L-methionine = isorhamnetin + S-adenosyl-L-homocysteine + H(+)</text>
        <dbReference type="Rhea" id="RHEA:60944"/>
        <dbReference type="ChEBI" id="CHEBI:15378"/>
        <dbReference type="ChEBI" id="CHEBI:57694"/>
        <dbReference type="ChEBI" id="CHEBI:57856"/>
        <dbReference type="ChEBI" id="CHEBI:59789"/>
        <dbReference type="ChEBI" id="CHEBI:144055"/>
    </reaction>
    <physiologicalReaction direction="left-to-right" evidence="3">
        <dbReference type="Rhea" id="RHEA:60945"/>
    </physiologicalReaction>
</comment>
<comment type="catalytic activity">
    <reaction evidence="3">
        <text>rhamnetin + S-adenosyl-L-methionine = rhamnacene + S-adenosyl-L-homocysteine + H(+)</text>
        <dbReference type="Rhea" id="RHEA:73271"/>
        <dbReference type="ChEBI" id="CHEBI:15378"/>
        <dbReference type="ChEBI" id="CHEBI:57856"/>
        <dbReference type="ChEBI" id="CHEBI:59789"/>
        <dbReference type="ChEBI" id="CHEBI:192706"/>
        <dbReference type="ChEBI" id="CHEBI:192768"/>
    </reaction>
    <physiologicalReaction direction="left-to-right" evidence="3">
        <dbReference type="Rhea" id="RHEA:73272"/>
    </physiologicalReaction>
</comment>
<comment type="catalytic activity">
    <reaction evidence="3">
        <text>3',4',5,7-tetrahydroxy-3-methoxyflavone + S-adenosyl-L-methionine = 3,3'-O-dimethylquercetin + S-adenosyl-L-homocysteine + H(+)</text>
        <dbReference type="Rhea" id="RHEA:74715"/>
        <dbReference type="ChEBI" id="CHEBI:15378"/>
        <dbReference type="ChEBI" id="CHEBI:57856"/>
        <dbReference type="ChEBI" id="CHEBI:57928"/>
        <dbReference type="ChEBI" id="CHEBI:59789"/>
        <dbReference type="ChEBI" id="CHEBI:194063"/>
    </reaction>
    <physiologicalReaction direction="left-to-right" evidence="3">
        <dbReference type="Rhea" id="RHEA:74716"/>
    </physiologicalReaction>
</comment>
<comment type="biophysicochemical properties">
    <kinetics>
        <KM evidence="3">0.46 uM for myricetin (in the presence of S-adenosylmethionine)</KM>
        <KM evidence="3">0.21 uM for laricitrin (in the presence of S-adenosylmethionine)</KM>
        <KM evidence="3">16.64 uM for S-adenosyl-L-methionine (in the presence of myricetin)</KM>
        <text evidence="3">kcat is 1.59 sec(-1) with myricetin as substrate (in the presence of S-adenosylmethionine) (PubMed:21343428). kcat is 0.45 sec(-1) with laricitrin as substrate (in the presence of S-adenosylmethionine) (PubMed:21343428). kcat is 0.47 sec(-1) with S-adenosyl-L-methionine as substrate (in the presence of myricetin) (PubMed:21343428).</text>
    </kinetics>
    <phDependence>
        <text evidence="3">Optimum pH is 7.5 with myricetin as substrate (in the presence of S-adenosylmethionine).</text>
    </phDependence>
</comment>
<comment type="pathway">
    <text evidence="3">Flavonoid metabolism.</text>
</comment>
<comment type="subunit">
    <text evidence="1">Homodimer.</text>
</comment>
<comment type="tissue specificity">
    <text evidence="3">Mainly expressed in leaves secreting glandular trichomes types 1 and 4 and, to a lesser extent, in storage trichomes type 6.</text>
</comment>
<comment type="similarity">
    <text evidence="2">Belongs to the class I-like SAM-binding methyltransferase superfamily. Cation-independent O-methyltransferase family.</text>
</comment>
<accession>F2YTN4</accession>
<keyword id="KW-0489">Methyltransferase</keyword>
<keyword id="KW-0949">S-adenosyl-L-methionine</keyword>
<keyword id="KW-0808">Transferase</keyword>
<reference key="1">
    <citation type="journal article" date="2011" name="Plant Physiol.">
        <title>Polymethylated myricetin in trichomes of the wild tomato species Solanum habrochaites and characterization of trichome-specific 3'/5'- and 7/4'-myricetin O-methyltransferases.</title>
        <authorList>
            <person name="Schmidt A."/>
            <person name="Li C."/>
            <person name="Shi F."/>
            <person name="Jones A.D."/>
            <person name="Pichersky E."/>
        </authorList>
    </citation>
    <scope>NUCLEOTIDE SEQUENCE [MRNA]</scope>
    <scope>FUNCTION</scope>
    <scope>CATALYTIC ACTIVITY</scope>
    <scope>PATHWAY</scope>
    <scope>TISSUE SPECIFICITY</scope>
    <scope>BIOPHYSICOCHEMICAL PROPERTIES</scope>
    <source>
        <strain>cv. LA1777</strain>
        <tissue>Trichome gland</tissue>
    </source>
</reference>
<reference key="2">
    <citation type="journal article" date="2019" name="Nat. Prod. Rep.">
        <title>Non-volatile natural products in plant glandular trichomes: chemistry, biological activities and biosynthesis.</title>
        <authorList>
            <person name="Liu Y."/>
            <person name="Jing S.-X."/>
            <person name="Luo S.-H."/>
            <person name="Li S.-H."/>
        </authorList>
    </citation>
    <scope>PATHWAY</scope>
    <scope>REVIEW</scope>
</reference>
<gene>
    <name evidence="4" type="primary">MOMT1</name>
</gene>